<comment type="function">
    <text evidence="6 7 8">Contributes to mitotic spindle assembly, maintenance of centrosome integrity and completion of cytokinesis as part of the HAUS augmin-like complex. Promotes the nucleation of microtubules from the spindle through recruitment of NEDD1 and gamma-tubulin.</text>
</comment>
<comment type="subunit">
    <text evidence="6 7 8 9">Component of the HAUS augmin-like complex. The complex interacts with the gamma-tubulin ring complex and this interaction is required for spindle assembly (PubMed:19369198, PubMed:19427217). Interacts with PLK1, NEDD1 and gamma-tubulin (PubMed:19029337). Interacts with EML3 (phosphorylated at 'Thr-881') (PubMed:30723163).</text>
</comment>
<comment type="interaction">
    <interactant intactId="EBI-2558196">
        <id>Q7Z4H7</id>
    </interactant>
    <interactant intactId="EBI-2514791">
        <id>Q96CS2</id>
        <label>HAUS1</label>
    </interactant>
    <organismsDiffer>false</organismsDiffer>
    <experiments>11</experiments>
</comment>
<comment type="interaction">
    <interactant intactId="EBI-2558196">
        <id>Q7Z4H7</id>
    </interactant>
    <interactant intactId="EBI-720080">
        <id>Q9NVX0</id>
        <label>HAUS2</label>
    </interactant>
    <organismsDiffer>false</organismsDiffer>
    <experiments>10</experiments>
</comment>
<comment type="interaction">
    <interactant intactId="EBI-2558196">
        <id>Q7Z4H7</id>
    </interactant>
    <interactant intactId="EBI-2558217">
        <id>Q68CZ6</id>
        <label>HAUS3</label>
    </interactant>
    <organismsDiffer>false</organismsDiffer>
    <experiments>4</experiments>
</comment>
<comment type="interaction">
    <interactant intactId="EBI-2558196">
        <id>Q7Z4H7</id>
    </interactant>
    <interactant intactId="EBI-2558168">
        <id>Q9H6D7</id>
        <label>HAUS4</label>
    </interactant>
    <organismsDiffer>false</organismsDiffer>
    <experiments>3</experiments>
</comment>
<comment type="interaction">
    <interactant intactId="EBI-2558196">
        <id>Q7Z4H7</id>
    </interactant>
    <interactant intactId="EBI-2558224">
        <id>O94927</id>
        <label>HAUS5</label>
    </interactant>
    <organismsDiffer>false</organismsDiffer>
    <experiments>4</experiments>
</comment>
<comment type="interaction">
    <interactant intactId="EBI-2558196">
        <id>Q7Z4H7</id>
    </interactant>
    <interactant intactId="EBI-395719">
        <id>Q99871</id>
        <label>HAUS7</label>
    </interactant>
    <organismsDiffer>false</organismsDiffer>
    <experiments>5</experiments>
</comment>
<comment type="interaction">
    <interactant intactId="EBI-2558196">
        <id>Q7Z4H7</id>
    </interactant>
    <interactant intactId="EBI-2558143">
        <id>Q9BT25</id>
        <label>HAUS8</label>
    </interactant>
    <organismsDiffer>false</organismsDiffer>
    <experiments>9</experiments>
</comment>
<comment type="interaction">
    <interactant intactId="EBI-2558196">
        <id>Q7Z4H7</id>
    </interactant>
    <interactant intactId="EBI-2555055">
        <id>Q8NHV4</id>
        <label>NEDD1</label>
    </interactant>
    <organismsDiffer>false</organismsDiffer>
    <experiments>2</experiments>
</comment>
<comment type="subcellular location">
    <subcellularLocation>
        <location evidence="5 6">Cytoplasm</location>
        <location evidence="5 6">Cytoskeleton</location>
    </subcellularLocation>
    <subcellularLocation>
        <location evidence="6 7 8 9">Cytoplasm</location>
        <location evidence="6 7 8 9">Cytoskeleton</location>
        <location evidence="6 7 8 9">Spindle</location>
    </subcellularLocation>
    <subcellularLocation>
        <location evidence="7 8">Cytoplasm</location>
        <location evidence="7 8">Cytoskeleton</location>
        <location evidence="7 8">Microtubule organizing center</location>
        <location evidence="7 8">Centrosome</location>
    </subcellularLocation>
    <text evidence="7 8 9">Localizes to interphase centrosomes and to mitotic spindle microtubules.</text>
</comment>
<comment type="alternative products">
    <event type="alternative splicing"/>
    <isoform>
        <id>Q7Z4H7-1</id>
        <name>1</name>
        <sequence type="displayed"/>
    </isoform>
    <isoform>
        <id>Q7Z4H7-2</id>
        <name>2</name>
        <sequence type="described" ref="VSP_017017 VSP_017018"/>
    </isoform>
    <isoform>
        <id>Q7Z4H7-3</id>
        <name>3</name>
        <sequence type="described" ref="VSP_040919"/>
    </isoform>
</comment>
<comment type="PTM">
    <text evidence="6">Phosphorylated during mitosis.</text>
</comment>
<comment type="similarity">
    <text evidence="12">Belongs to the HAUS6 family.</text>
</comment>
<comment type="sequence caution" evidence="12">
    <conflict type="miscellaneous discrepancy">
        <sequence resource="EMBL-CDS" id="AAH26178"/>
    </conflict>
    <text>Contaminating sequence. Potential poly-A sequence.</text>
</comment>
<comment type="sequence caution" evidence="12">
    <conflict type="erroneous initiation">
        <sequence resource="EMBL-CDS" id="AAI11042"/>
    </conflict>
    <text>Truncated N-terminus.</text>
</comment>
<comment type="sequence caution" evidence="12">
    <conflict type="erroneous initiation">
        <sequence resource="EMBL-CDS" id="BAA90922"/>
    </conflict>
    <text>Truncated N-terminus.</text>
</comment>
<comment type="sequence caution" evidence="12">
    <conflict type="erroneous initiation">
        <sequence resource="EMBL-CDS" id="BAB14334"/>
    </conflict>
    <text>Truncated N-terminus.</text>
</comment>
<comment type="sequence caution" evidence="12">
    <conflict type="erroneous initiation">
        <sequence resource="EMBL-CDS" id="BAB14388"/>
    </conflict>
    <text>Truncated N-terminus.</text>
</comment>
<comment type="sequence caution" evidence="12">
    <conflict type="erroneous initiation">
        <sequence resource="EMBL-CDS" id="BAG63294"/>
    </conflict>
    <text>Truncated N-terminus.</text>
</comment>
<reference key="1">
    <citation type="submission" date="2002-07" db="EMBL/GenBank/DDBJ databases">
        <authorList>
            <person name="Ding P."/>
            <person name="Han W."/>
            <person name="Wang L."/>
            <person name="Wang Y."/>
            <person name="Qiu X."/>
            <person name="Xu M."/>
            <person name="Ma D."/>
        </authorList>
    </citation>
    <scope>NUCLEOTIDE SEQUENCE [MRNA] (ISOFORM 1)</scope>
    <source>
        <tissue>Testis</tissue>
    </source>
</reference>
<reference key="2">
    <citation type="submission" date="2002-08" db="EMBL/GenBank/DDBJ databases">
        <authorList>
            <person name="Guo J.H."/>
            <person name="Chen L."/>
            <person name="Yu L."/>
        </authorList>
    </citation>
    <scope>NUCLEOTIDE SEQUENCE [LARGE SCALE MRNA] (ISOFORM 1)</scope>
    <source>
        <tissue>Brain</tissue>
    </source>
</reference>
<reference key="3">
    <citation type="journal article" date="2004" name="Nat. Genet.">
        <title>Complete sequencing and characterization of 21,243 full-length human cDNAs.</title>
        <authorList>
            <person name="Ota T."/>
            <person name="Suzuki Y."/>
            <person name="Nishikawa T."/>
            <person name="Otsuki T."/>
            <person name="Sugiyama T."/>
            <person name="Irie R."/>
            <person name="Wakamatsu A."/>
            <person name="Hayashi K."/>
            <person name="Sato H."/>
            <person name="Nagai K."/>
            <person name="Kimura K."/>
            <person name="Makita H."/>
            <person name="Sekine M."/>
            <person name="Obayashi M."/>
            <person name="Nishi T."/>
            <person name="Shibahara T."/>
            <person name="Tanaka T."/>
            <person name="Ishii S."/>
            <person name="Yamamoto J."/>
            <person name="Saito K."/>
            <person name="Kawai Y."/>
            <person name="Isono Y."/>
            <person name="Nakamura Y."/>
            <person name="Nagahari K."/>
            <person name="Murakami K."/>
            <person name="Yasuda T."/>
            <person name="Iwayanagi T."/>
            <person name="Wagatsuma M."/>
            <person name="Shiratori A."/>
            <person name="Sudo H."/>
            <person name="Hosoiri T."/>
            <person name="Kaku Y."/>
            <person name="Kodaira H."/>
            <person name="Kondo H."/>
            <person name="Sugawara M."/>
            <person name="Takahashi M."/>
            <person name="Kanda K."/>
            <person name="Yokoi T."/>
            <person name="Furuya T."/>
            <person name="Kikkawa E."/>
            <person name="Omura Y."/>
            <person name="Abe K."/>
            <person name="Kamihara K."/>
            <person name="Katsuta N."/>
            <person name="Sato K."/>
            <person name="Tanikawa M."/>
            <person name="Yamazaki M."/>
            <person name="Ninomiya K."/>
            <person name="Ishibashi T."/>
            <person name="Yamashita H."/>
            <person name="Murakawa K."/>
            <person name="Fujimori K."/>
            <person name="Tanai H."/>
            <person name="Kimata M."/>
            <person name="Watanabe M."/>
            <person name="Hiraoka S."/>
            <person name="Chiba Y."/>
            <person name="Ishida S."/>
            <person name="Ono Y."/>
            <person name="Takiguchi S."/>
            <person name="Watanabe S."/>
            <person name="Yosida M."/>
            <person name="Hotuta T."/>
            <person name="Kusano J."/>
            <person name="Kanehori K."/>
            <person name="Takahashi-Fujii A."/>
            <person name="Hara H."/>
            <person name="Tanase T.-O."/>
            <person name="Nomura Y."/>
            <person name="Togiya S."/>
            <person name="Komai F."/>
            <person name="Hara R."/>
            <person name="Takeuchi K."/>
            <person name="Arita M."/>
            <person name="Imose N."/>
            <person name="Musashino K."/>
            <person name="Yuuki H."/>
            <person name="Oshima A."/>
            <person name="Sasaki N."/>
            <person name="Aotsuka S."/>
            <person name="Yoshikawa Y."/>
            <person name="Matsunawa H."/>
            <person name="Ichihara T."/>
            <person name="Shiohata N."/>
            <person name="Sano S."/>
            <person name="Moriya S."/>
            <person name="Momiyama H."/>
            <person name="Satoh N."/>
            <person name="Takami S."/>
            <person name="Terashima Y."/>
            <person name="Suzuki O."/>
            <person name="Nakagawa S."/>
            <person name="Senoh A."/>
            <person name="Mizoguchi H."/>
            <person name="Goto Y."/>
            <person name="Shimizu F."/>
            <person name="Wakebe H."/>
            <person name="Hishigaki H."/>
            <person name="Watanabe T."/>
            <person name="Sugiyama A."/>
            <person name="Takemoto M."/>
            <person name="Kawakami B."/>
            <person name="Yamazaki M."/>
            <person name="Watanabe K."/>
            <person name="Kumagai A."/>
            <person name="Itakura S."/>
            <person name="Fukuzumi Y."/>
            <person name="Fujimori Y."/>
            <person name="Komiyama M."/>
            <person name="Tashiro H."/>
            <person name="Tanigami A."/>
            <person name="Fujiwara T."/>
            <person name="Ono T."/>
            <person name="Yamada K."/>
            <person name="Fujii Y."/>
            <person name="Ozaki K."/>
            <person name="Hirao M."/>
            <person name="Ohmori Y."/>
            <person name="Kawabata A."/>
            <person name="Hikiji T."/>
            <person name="Kobatake N."/>
            <person name="Inagaki H."/>
            <person name="Ikema Y."/>
            <person name="Okamoto S."/>
            <person name="Okitani R."/>
            <person name="Kawakami T."/>
            <person name="Noguchi S."/>
            <person name="Itoh T."/>
            <person name="Shigeta K."/>
            <person name="Senba T."/>
            <person name="Matsumura K."/>
            <person name="Nakajima Y."/>
            <person name="Mizuno T."/>
            <person name="Morinaga M."/>
            <person name="Sasaki M."/>
            <person name="Togashi T."/>
            <person name="Oyama M."/>
            <person name="Hata H."/>
            <person name="Watanabe M."/>
            <person name="Komatsu T."/>
            <person name="Mizushima-Sugano J."/>
            <person name="Satoh T."/>
            <person name="Shirai Y."/>
            <person name="Takahashi Y."/>
            <person name="Nakagawa K."/>
            <person name="Okumura K."/>
            <person name="Nagase T."/>
            <person name="Nomura N."/>
            <person name="Kikuchi H."/>
            <person name="Masuho Y."/>
            <person name="Yamashita R."/>
            <person name="Nakai K."/>
            <person name="Yada T."/>
            <person name="Nakamura Y."/>
            <person name="Ohara O."/>
            <person name="Isogai T."/>
            <person name="Sugano S."/>
        </authorList>
    </citation>
    <scope>NUCLEOTIDE SEQUENCE [LARGE SCALE MRNA] (ISOFORM 1)</scope>
    <scope>NUCLEOTIDE SEQUENCE [LARGE SCALE MRNA] OF 288-955 (ISOFORM 3)</scope>
    <scope>VARIANT GLN-674</scope>
    <source>
        <tissue>Colon</tissue>
        <tissue>Teratocarcinoma</tissue>
    </source>
</reference>
<reference key="4">
    <citation type="journal article" date="2004" name="Nature">
        <title>DNA sequence and analysis of human chromosome 9.</title>
        <authorList>
            <person name="Humphray S.J."/>
            <person name="Oliver K."/>
            <person name="Hunt A.R."/>
            <person name="Plumb R.W."/>
            <person name="Loveland J.E."/>
            <person name="Howe K.L."/>
            <person name="Andrews T.D."/>
            <person name="Searle S."/>
            <person name="Hunt S.E."/>
            <person name="Scott C.E."/>
            <person name="Jones M.C."/>
            <person name="Ainscough R."/>
            <person name="Almeida J.P."/>
            <person name="Ambrose K.D."/>
            <person name="Ashwell R.I.S."/>
            <person name="Babbage A.K."/>
            <person name="Babbage S."/>
            <person name="Bagguley C.L."/>
            <person name="Bailey J."/>
            <person name="Banerjee R."/>
            <person name="Barker D.J."/>
            <person name="Barlow K.F."/>
            <person name="Bates K."/>
            <person name="Beasley H."/>
            <person name="Beasley O."/>
            <person name="Bird C.P."/>
            <person name="Bray-Allen S."/>
            <person name="Brown A.J."/>
            <person name="Brown J.Y."/>
            <person name="Burford D."/>
            <person name="Burrill W."/>
            <person name="Burton J."/>
            <person name="Carder C."/>
            <person name="Carter N.P."/>
            <person name="Chapman J.C."/>
            <person name="Chen Y."/>
            <person name="Clarke G."/>
            <person name="Clark S.Y."/>
            <person name="Clee C.M."/>
            <person name="Clegg S."/>
            <person name="Collier R.E."/>
            <person name="Corby N."/>
            <person name="Crosier M."/>
            <person name="Cummings A.T."/>
            <person name="Davies J."/>
            <person name="Dhami P."/>
            <person name="Dunn M."/>
            <person name="Dutta I."/>
            <person name="Dyer L.W."/>
            <person name="Earthrowl M.E."/>
            <person name="Faulkner L."/>
            <person name="Fleming C.J."/>
            <person name="Frankish A."/>
            <person name="Frankland J.A."/>
            <person name="French L."/>
            <person name="Fricker D.G."/>
            <person name="Garner P."/>
            <person name="Garnett J."/>
            <person name="Ghori J."/>
            <person name="Gilbert J.G.R."/>
            <person name="Glison C."/>
            <person name="Grafham D.V."/>
            <person name="Gribble S."/>
            <person name="Griffiths C."/>
            <person name="Griffiths-Jones S."/>
            <person name="Grocock R."/>
            <person name="Guy J."/>
            <person name="Hall R.E."/>
            <person name="Hammond S."/>
            <person name="Harley J.L."/>
            <person name="Harrison E.S.I."/>
            <person name="Hart E.A."/>
            <person name="Heath P.D."/>
            <person name="Henderson C.D."/>
            <person name="Hopkins B.L."/>
            <person name="Howard P.J."/>
            <person name="Howden P.J."/>
            <person name="Huckle E."/>
            <person name="Johnson C."/>
            <person name="Johnson D."/>
            <person name="Joy A.A."/>
            <person name="Kay M."/>
            <person name="Keenan S."/>
            <person name="Kershaw J.K."/>
            <person name="Kimberley A.M."/>
            <person name="King A."/>
            <person name="Knights A."/>
            <person name="Laird G.K."/>
            <person name="Langford C."/>
            <person name="Lawlor S."/>
            <person name="Leongamornlert D.A."/>
            <person name="Leversha M."/>
            <person name="Lloyd C."/>
            <person name="Lloyd D.M."/>
            <person name="Lovell J."/>
            <person name="Martin S."/>
            <person name="Mashreghi-Mohammadi M."/>
            <person name="Matthews L."/>
            <person name="McLaren S."/>
            <person name="McLay K.E."/>
            <person name="McMurray A."/>
            <person name="Milne S."/>
            <person name="Nickerson T."/>
            <person name="Nisbett J."/>
            <person name="Nordsiek G."/>
            <person name="Pearce A.V."/>
            <person name="Peck A.I."/>
            <person name="Porter K.M."/>
            <person name="Pandian R."/>
            <person name="Pelan S."/>
            <person name="Phillimore B."/>
            <person name="Povey S."/>
            <person name="Ramsey Y."/>
            <person name="Rand V."/>
            <person name="Scharfe M."/>
            <person name="Sehra H.K."/>
            <person name="Shownkeen R."/>
            <person name="Sims S.K."/>
            <person name="Skuce C.D."/>
            <person name="Smith M."/>
            <person name="Steward C.A."/>
            <person name="Swarbreck D."/>
            <person name="Sycamore N."/>
            <person name="Tester J."/>
            <person name="Thorpe A."/>
            <person name="Tracey A."/>
            <person name="Tromans A."/>
            <person name="Thomas D.W."/>
            <person name="Wall M."/>
            <person name="Wallis J.M."/>
            <person name="West A.P."/>
            <person name="Whitehead S.L."/>
            <person name="Willey D.L."/>
            <person name="Williams S.A."/>
            <person name="Wilming L."/>
            <person name="Wray P.W."/>
            <person name="Young L."/>
            <person name="Ashurst J.L."/>
            <person name="Coulson A."/>
            <person name="Blocker H."/>
            <person name="Durbin R.M."/>
            <person name="Sulston J.E."/>
            <person name="Hubbard T."/>
            <person name="Jackson M.J."/>
            <person name="Bentley D.R."/>
            <person name="Beck S."/>
            <person name="Rogers J."/>
            <person name="Dunham I."/>
        </authorList>
    </citation>
    <scope>NUCLEOTIDE SEQUENCE [LARGE SCALE GENOMIC DNA]</scope>
</reference>
<reference key="5">
    <citation type="journal article" date="2004" name="Genome Res.">
        <title>The status, quality, and expansion of the NIH full-length cDNA project: the Mammalian Gene Collection (MGC).</title>
        <authorList>
            <consortium name="The MGC Project Team"/>
        </authorList>
    </citation>
    <scope>NUCLEOTIDE SEQUENCE [LARGE SCALE MRNA] (ISOFORM 1)</scope>
    <scope>NUCLEOTIDE SEQUENCE [LARGE SCALE MRNA] OF 251-955 (ISOFORM 2)</scope>
    <scope>VARIANT ILE-761</scope>
    <source>
        <tissue>Duodenum</tissue>
        <tissue>Eye</tissue>
        <tissue>Skin</tissue>
        <tissue>Uterus</tissue>
    </source>
</reference>
<reference key="6">
    <citation type="journal article" date="2000" name="DNA Res.">
        <title>Prediction of the coding sequences of unidentified human genes. XVIII. The complete sequences of 100 new cDNA clones from brain which code for large proteins in vitro.</title>
        <authorList>
            <person name="Nagase T."/>
            <person name="Kikuno R."/>
            <person name="Nakayama M."/>
            <person name="Hirosawa M."/>
            <person name="Ohara O."/>
        </authorList>
    </citation>
    <scope>NUCLEOTIDE SEQUENCE [LARGE SCALE MRNA] OF 286-955 (ISOFORM 1)</scope>
    <source>
        <tissue>Brain</tissue>
    </source>
</reference>
<reference key="7">
    <citation type="journal article" date="2008" name="J. Cell Biol.">
        <title>Augmin: a protein complex required for centrosome-independent microtubule generation within the spindle.</title>
        <authorList>
            <person name="Goshima G."/>
            <person name="Mayer M."/>
            <person name="Zhang N."/>
            <person name="Stuurman N."/>
            <person name="Vale R.D."/>
        </authorList>
    </citation>
    <scope>IDENTIFICATION</scope>
    <scope>SUBCELLULAR LOCATION</scope>
</reference>
<reference key="8">
    <citation type="journal article" date="2006" name="Nat. Biotechnol.">
        <title>A probability-based approach for high-throughput protein phosphorylation analysis and site localization.</title>
        <authorList>
            <person name="Beausoleil S.A."/>
            <person name="Villen J."/>
            <person name="Gerber S.A."/>
            <person name="Rush J."/>
            <person name="Gygi S.P."/>
        </authorList>
    </citation>
    <scope>PHOSPHORYLATION [LARGE SCALE ANALYSIS] AT SER-552</scope>
    <scope>IDENTIFICATION BY MASS SPECTROMETRY [LARGE SCALE ANALYSIS]</scope>
    <source>
        <tissue>Cervix carcinoma</tissue>
    </source>
</reference>
<reference key="9">
    <citation type="journal article" date="2008" name="J. Cell Biol.">
        <title>FAM29A promotes microtubule amplification via recruitment of the NEDD1-gamma-tubulin complex to the mitotic spindle.</title>
        <authorList>
            <person name="Zhu H."/>
            <person name="Coppinger J.A."/>
            <person name="Jang C.-Y."/>
            <person name="Yates J.R. III"/>
            <person name="Fang G."/>
        </authorList>
    </citation>
    <scope>FUNCTION</scope>
    <scope>INTERACTION WITH PLK1; GAMMA-TUBULIN AND NEDD1</scope>
    <scope>PHOSPHORYLATION</scope>
    <scope>SUBCELLULAR LOCATION</scope>
</reference>
<reference key="10">
    <citation type="journal article" date="2008" name="J. Proteome Res.">
        <title>Combining protein-based IMAC, peptide-based IMAC, and MudPIT for efficient phosphoproteomic analysis.</title>
        <authorList>
            <person name="Cantin G.T."/>
            <person name="Yi W."/>
            <person name="Lu B."/>
            <person name="Park S.K."/>
            <person name="Xu T."/>
            <person name="Lee J.-D."/>
            <person name="Yates J.R. III"/>
        </authorList>
    </citation>
    <scope>PHOSPHORYLATION [LARGE SCALE ANALYSIS] AT THR-584 AND SER-805</scope>
    <scope>IDENTIFICATION BY MASS SPECTROMETRY [LARGE SCALE ANALYSIS]</scope>
    <source>
        <tissue>Cervix carcinoma</tissue>
    </source>
</reference>
<reference key="11">
    <citation type="journal article" date="2008" name="Mol. Cell">
        <title>Kinase-selective enrichment enables quantitative phosphoproteomics of the kinome across the cell cycle.</title>
        <authorList>
            <person name="Daub H."/>
            <person name="Olsen J.V."/>
            <person name="Bairlein M."/>
            <person name="Gnad F."/>
            <person name="Oppermann F.S."/>
            <person name="Korner R."/>
            <person name="Greff Z."/>
            <person name="Keri G."/>
            <person name="Stemmann O."/>
            <person name="Mann M."/>
        </authorList>
    </citation>
    <scope>PHOSPHORYLATION [LARGE SCALE ANALYSIS] AT SER-507</scope>
    <scope>IDENTIFICATION BY MASS SPECTROMETRY [LARGE SCALE ANALYSIS]</scope>
    <source>
        <tissue>Cervix carcinoma</tissue>
    </source>
</reference>
<reference key="12">
    <citation type="journal article" date="2008" name="Proc. Natl. Acad. Sci. U.S.A.">
        <title>A quantitative atlas of mitotic phosphorylation.</title>
        <authorList>
            <person name="Dephoure N."/>
            <person name="Zhou C."/>
            <person name="Villen J."/>
            <person name="Beausoleil S.A."/>
            <person name="Bakalarski C.E."/>
            <person name="Elledge S.J."/>
            <person name="Gygi S.P."/>
        </authorList>
    </citation>
    <scope>PHOSPHORYLATION [LARGE SCALE ANALYSIS] AT SER-507; SER-552; THR-584 AND SER-715</scope>
    <scope>IDENTIFICATION BY MASS SPECTROMETRY [LARGE SCALE ANALYSIS]</scope>
    <source>
        <tissue>Cervix carcinoma</tissue>
    </source>
</reference>
<reference key="13">
    <citation type="journal article" date="2009" name="Anal. Chem.">
        <title>Lys-N and trypsin cover complementary parts of the phosphoproteome in a refined SCX-based approach.</title>
        <authorList>
            <person name="Gauci S."/>
            <person name="Helbig A.O."/>
            <person name="Slijper M."/>
            <person name="Krijgsveld J."/>
            <person name="Heck A.J."/>
            <person name="Mohammed S."/>
        </authorList>
    </citation>
    <scope>IDENTIFICATION BY MASS SPECTROMETRY [LARGE SCALE ANALYSIS]</scope>
</reference>
<reference key="14">
    <citation type="journal article" date="2009" name="Curr. Biol.">
        <title>HAUS, the 8-subunit human augmin complex, regulates centrosome and spindle integrity.</title>
        <authorList>
            <person name="Lawo S."/>
            <person name="Bashkurov M."/>
            <person name="Mullin M."/>
            <person name="Ferreria M.G."/>
            <person name="Kittler R."/>
            <person name="Habermann B."/>
            <person name="Tagliaferro A."/>
            <person name="Poser I."/>
            <person name="Hutchins J.R.A."/>
            <person name="Hegemann B."/>
            <person name="Pinchev D."/>
            <person name="Buchholz F."/>
            <person name="Peters J.-M."/>
            <person name="Hyman A.A."/>
            <person name="Gingras A.-C."/>
            <person name="Pelletier L."/>
        </authorList>
    </citation>
    <scope>IDENTIFICATION IN THE HAUS AUGMIN-LIKE COMPLEX</scope>
    <scope>FUNCTION</scope>
    <scope>SUBCELLULAR LOCATION</scope>
</reference>
<reference key="15">
    <citation type="journal article" date="2009" name="Proc. Natl. Acad. Sci. U.S.A.">
        <title>The augmin complex plays a critical role in spindle microtubule generation for mitotic progression and cytokinesis in human cells.</title>
        <authorList>
            <person name="Uehara R."/>
            <person name="Nozawa R.-S."/>
            <person name="Tomioka A."/>
            <person name="Petry S."/>
            <person name="Vale R.D."/>
            <person name="Obuse C."/>
            <person name="Goshima G."/>
        </authorList>
    </citation>
    <scope>IDENTIFICATION IN THE HAUS AUGMIN-LIKE COMPLEX</scope>
    <scope>FUNCTION</scope>
    <scope>SUBCELLULAR LOCATION</scope>
</reference>
<reference key="16">
    <citation type="journal article" date="2009" name="Sci. Signal.">
        <title>Quantitative phosphoproteomic analysis of T cell receptor signaling reveals system-wide modulation of protein-protein interactions.</title>
        <authorList>
            <person name="Mayya V."/>
            <person name="Lundgren D.H."/>
            <person name="Hwang S.-I."/>
            <person name="Rezaul K."/>
            <person name="Wu L."/>
            <person name="Eng J.K."/>
            <person name="Rodionov V."/>
            <person name="Han D.K."/>
        </authorList>
    </citation>
    <scope>PHOSPHORYLATION [LARGE SCALE ANALYSIS] AT SER-406 AND SER-552</scope>
    <scope>IDENTIFICATION BY MASS SPECTROMETRY [LARGE SCALE ANALYSIS]</scope>
    <source>
        <tissue>Leukemic T-cell</tissue>
    </source>
</reference>
<reference key="17">
    <citation type="journal article" date="2010" name="Sci. Signal.">
        <title>Quantitative phosphoproteomics reveals widespread full phosphorylation site occupancy during mitosis.</title>
        <authorList>
            <person name="Olsen J.V."/>
            <person name="Vermeulen M."/>
            <person name="Santamaria A."/>
            <person name="Kumar C."/>
            <person name="Miller M.L."/>
            <person name="Jensen L.J."/>
            <person name="Gnad F."/>
            <person name="Cox J."/>
            <person name="Jensen T.S."/>
            <person name="Nigg E.A."/>
            <person name="Brunak S."/>
            <person name="Mann M."/>
        </authorList>
    </citation>
    <scope>PHOSPHORYLATION [LARGE SCALE ANALYSIS] AT SER-507; SER-552 AND THR-584</scope>
    <scope>IDENTIFICATION BY MASS SPECTROMETRY [LARGE SCALE ANALYSIS]</scope>
    <source>
        <tissue>Cervix carcinoma</tissue>
    </source>
</reference>
<reference key="18">
    <citation type="journal article" date="2011" name="BMC Syst. Biol.">
        <title>Initial characterization of the human central proteome.</title>
        <authorList>
            <person name="Burkard T.R."/>
            <person name="Planyavsky M."/>
            <person name="Kaupe I."/>
            <person name="Breitwieser F.P."/>
            <person name="Buerckstuemmer T."/>
            <person name="Bennett K.L."/>
            <person name="Superti-Furga G."/>
            <person name="Colinge J."/>
        </authorList>
    </citation>
    <scope>IDENTIFICATION BY MASS SPECTROMETRY [LARGE SCALE ANALYSIS]</scope>
</reference>
<reference key="19">
    <citation type="journal article" date="2011" name="Sci. Signal.">
        <title>System-wide temporal characterization of the proteome and phosphoproteome of human embryonic stem cell differentiation.</title>
        <authorList>
            <person name="Rigbolt K.T."/>
            <person name="Prokhorova T.A."/>
            <person name="Akimov V."/>
            <person name="Henningsen J."/>
            <person name="Johansen P.T."/>
            <person name="Kratchmarova I."/>
            <person name="Kassem M."/>
            <person name="Mann M."/>
            <person name="Olsen J.V."/>
            <person name="Blagoev B."/>
        </authorList>
    </citation>
    <scope>PHOSPHORYLATION [LARGE SCALE ANALYSIS] AT SER-552</scope>
    <scope>IDENTIFICATION BY MASS SPECTROMETRY [LARGE SCALE ANALYSIS]</scope>
</reference>
<reference key="20">
    <citation type="journal article" date="2013" name="J. Proteome Res.">
        <title>Toward a comprehensive characterization of a human cancer cell phosphoproteome.</title>
        <authorList>
            <person name="Zhou H."/>
            <person name="Di Palma S."/>
            <person name="Preisinger C."/>
            <person name="Peng M."/>
            <person name="Polat A.N."/>
            <person name="Heck A.J."/>
            <person name="Mohammed S."/>
        </authorList>
    </citation>
    <scope>PHOSPHORYLATION [LARGE SCALE ANALYSIS] AT SER-507; SER-524; SER-530; SER-550; SER-552; THR-584; SER-715; SER-728; SER-742; SER-805; THR-823; SER-908; SER-914 AND SER-943</scope>
    <scope>IDENTIFICATION BY MASS SPECTROMETRY [LARGE SCALE ANALYSIS]</scope>
    <source>
        <tissue>Cervix carcinoma</tissue>
        <tissue>Erythroleukemia</tissue>
    </source>
</reference>
<reference key="21">
    <citation type="journal article" date="2019" name="J. Biol. Chem.">
        <title>The microtubule-associated protein EML3 regulates mitotic spindle assembly by recruiting the Augmin complex to spindle microtubules.</title>
        <authorList>
            <person name="Luo J."/>
            <person name="Yang B."/>
            <person name="Xin G."/>
            <person name="Sun M."/>
            <person name="Zhang B."/>
            <person name="Guo X."/>
            <person name="Jiang Q."/>
            <person name="Zhang C."/>
        </authorList>
    </citation>
    <scope>INTERACTION WITH EML3</scope>
    <scope>SUBCELLULAR LOCATION</scope>
</reference>
<organism>
    <name type="scientific">Homo sapiens</name>
    <name type="common">Human</name>
    <dbReference type="NCBI Taxonomy" id="9606"/>
    <lineage>
        <taxon>Eukaryota</taxon>
        <taxon>Metazoa</taxon>
        <taxon>Chordata</taxon>
        <taxon>Craniata</taxon>
        <taxon>Vertebrata</taxon>
        <taxon>Euteleostomi</taxon>
        <taxon>Mammalia</taxon>
        <taxon>Eutheria</taxon>
        <taxon>Euarchontoglires</taxon>
        <taxon>Primates</taxon>
        <taxon>Haplorrhini</taxon>
        <taxon>Catarrhini</taxon>
        <taxon>Hominidae</taxon>
        <taxon>Homo</taxon>
    </lineage>
</organism>
<gene>
    <name type="primary">HAUS6</name>
    <name type="synonym">DGT6</name>
    <name type="synonym">FAM29A</name>
    <name type="synonym">KIAA1574</name>
</gene>
<evidence type="ECO:0000255" key="1"/>
<evidence type="ECO:0000256" key="2">
    <source>
        <dbReference type="SAM" id="MobiDB-lite"/>
    </source>
</evidence>
<evidence type="ECO:0000269" key="3">
    <source>
    </source>
</evidence>
<evidence type="ECO:0000269" key="4">
    <source>
    </source>
</evidence>
<evidence type="ECO:0000269" key="5">
    <source>
    </source>
</evidence>
<evidence type="ECO:0000269" key="6">
    <source>
    </source>
</evidence>
<evidence type="ECO:0000269" key="7">
    <source>
    </source>
</evidence>
<evidence type="ECO:0000269" key="8">
    <source>
    </source>
</evidence>
<evidence type="ECO:0000269" key="9">
    <source>
    </source>
</evidence>
<evidence type="ECO:0000303" key="10">
    <source>
    </source>
</evidence>
<evidence type="ECO:0000303" key="11">
    <source>
    </source>
</evidence>
<evidence type="ECO:0000305" key="12"/>
<evidence type="ECO:0007744" key="13">
    <source>
    </source>
</evidence>
<evidence type="ECO:0007744" key="14">
    <source>
    </source>
</evidence>
<evidence type="ECO:0007744" key="15">
    <source>
    </source>
</evidence>
<evidence type="ECO:0007744" key="16">
    <source>
    </source>
</evidence>
<evidence type="ECO:0007744" key="17">
    <source>
    </source>
</evidence>
<evidence type="ECO:0007744" key="18">
    <source>
    </source>
</evidence>
<evidence type="ECO:0007744" key="19">
    <source>
    </source>
</evidence>
<evidence type="ECO:0007744" key="20">
    <source>
    </source>
</evidence>
<protein>
    <recommendedName>
        <fullName>HAUS augmin-like complex subunit 6</fullName>
    </recommendedName>
</protein>
<accession>Q7Z4H7</accession>
<accession>B3KPK4</accession>
<accession>B4DX82</accession>
<accession>Q05CG1</accession>
<accession>Q14CB6</accession>
<accession>Q14CD9</accession>
<accession>Q2TA91</accession>
<accession>Q6IQ10</accession>
<accession>Q6NZX5</accession>
<accession>Q8IZQ4</accession>
<accession>Q96FN0</accession>
<accession>Q9H950</accession>
<accession>Q9H998</accession>
<accession>Q9HCJ8</accession>
<accession>Q9NXT8</accession>
<dbReference type="EMBL" id="AF533709">
    <property type="protein sequence ID" value="AAQ09022.1"/>
    <property type="molecule type" value="mRNA"/>
</dbReference>
<dbReference type="EMBL" id="AF537091">
    <property type="protein sequence ID" value="AAN05700.1"/>
    <property type="molecule type" value="mRNA"/>
</dbReference>
<dbReference type="EMBL" id="AK000067">
    <property type="protein sequence ID" value="BAA90922.1"/>
    <property type="status" value="ALT_INIT"/>
    <property type="molecule type" value="mRNA"/>
</dbReference>
<dbReference type="EMBL" id="AK022964">
    <property type="protein sequence ID" value="BAB14334.1"/>
    <property type="status" value="ALT_INIT"/>
    <property type="molecule type" value="mRNA"/>
</dbReference>
<dbReference type="EMBL" id="AK023068">
    <property type="protein sequence ID" value="BAB14388.1"/>
    <property type="status" value="ALT_INIT"/>
    <property type="molecule type" value="mRNA"/>
</dbReference>
<dbReference type="EMBL" id="AK301852">
    <property type="protein sequence ID" value="BAG63294.1"/>
    <property type="status" value="ALT_INIT"/>
    <property type="molecule type" value="mRNA"/>
</dbReference>
<dbReference type="EMBL" id="AK056458">
    <property type="protein sequence ID" value="BAG51716.1"/>
    <property type="molecule type" value="mRNA"/>
</dbReference>
<dbReference type="EMBL" id="AL356000">
    <property type="status" value="NOT_ANNOTATED_CDS"/>
    <property type="molecule type" value="Genomic_DNA"/>
</dbReference>
<dbReference type="EMBL" id="AL591206">
    <property type="status" value="NOT_ANNOTATED_CDS"/>
    <property type="molecule type" value="Genomic_DNA"/>
</dbReference>
<dbReference type="EMBL" id="BC010632">
    <property type="protein sequence ID" value="AAH10632.1"/>
    <property type="molecule type" value="mRNA"/>
</dbReference>
<dbReference type="EMBL" id="BC026178">
    <property type="protein sequence ID" value="AAH26178.1"/>
    <property type="status" value="ALT_SEQ"/>
    <property type="molecule type" value="mRNA"/>
</dbReference>
<dbReference type="EMBL" id="BC065935">
    <property type="protein sequence ID" value="AAH65935.1"/>
    <property type="molecule type" value="mRNA"/>
</dbReference>
<dbReference type="EMBL" id="BC071625">
    <property type="protein sequence ID" value="AAH71625.1"/>
    <property type="molecule type" value="mRNA"/>
</dbReference>
<dbReference type="EMBL" id="BC111041">
    <property type="protein sequence ID" value="AAI11042.1"/>
    <property type="status" value="ALT_INIT"/>
    <property type="molecule type" value="mRNA"/>
</dbReference>
<dbReference type="EMBL" id="BC113981">
    <property type="protein sequence ID" value="AAI13982.1"/>
    <property type="molecule type" value="mRNA"/>
</dbReference>
<dbReference type="EMBL" id="BC114492">
    <property type="protein sequence ID" value="AAI14493.1"/>
    <property type="molecule type" value="mRNA"/>
</dbReference>
<dbReference type="EMBL" id="AB046794">
    <property type="protein sequence ID" value="BAB13400.1"/>
    <property type="molecule type" value="mRNA"/>
</dbReference>
<dbReference type="CCDS" id="CCDS6489.1">
    <molecule id="Q7Z4H7-1"/>
</dbReference>
<dbReference type="RefSeq" id="NP_001257819.1">
    <molecule id="Q7Z4H7-3"/>
    <property type="nucleotide sequence ID" value="NM_001270890.2"/>
</dbReference>
<dbReference type="RefSeq" id="NP_060115.3">
    <molecule id="Q7Z4H7-1"/>
    <property type="nucleotide sequence ID" value="NM_017645.4"/>
</dbReference>
<dbReference type="PDB" id="7SQK">
    <property type="method" value="EM"/>
    <property type="resolution" value="8.00 A"/>
    <property type="chains" value="F=1-432"/>
</dbReference>
<dbReference type="PDBsum" id="7SQK"/>
<dbReference type="EMDB" id="EMD-25387"/>
<dbReference type="SMR" id="Q7Z4H7"/>
<dbReference type="BioGRID" id="120160">
    <property type="interactions" value="199"/>
</dbReference>
<dbReference type="ComplexPortal" id="CPX-1847">
    <property type="entry name" value="HAUS complex"/>
</dbReference>
<dbReference type="CORUM" id="Q7Z4H7"/>
<dbReference type="DIP" id="DIP-48830N"/>
<dbReference type="FunCoup" id="Q7Z4H7">
    <property type="interactions" value="2152"/>
</dbReference>
<dbReference type="IntAct" id="Q7Z4H7">
    <property type="interactions" value="124"/>
</dbReference>
<dbReference type="MINT" id="Q7Z4H7"/>
<dbReference type="STRING" id="9606.ENSP00000369871"/>
<dbReference type="GlyGen" id="Q7Z4H7">
    <property type="glycosylation" value="4 sites, 2 N-linked glycans (2 sites), 1 O-linked glycan (1 site)"/>
</dbReference>
<dbReference type="iPTMnet" id="Q7Z4H7"/>
<dbReference type="MetOSite" id="Q7Z4H7"/>
<dbReference type="PhosphoSitePlus" id="Q7Z4H7"/>
<dbReference type="SwissPalm" id="Q7Z4H7"/>
<dbReference type="BioMuta" id="HAUS6"/>
<dbReference type="DMDM" id="85700957"/>
<dbReference type="jPOST" id="Q7Z4H7"/>
<dbReference type="MassIVE" id="Q7Z4H7"/>
<dbReference type="PaxDb" id="9606-ENSP00000369871"/>
<dbReference type="PeptideAtlas" id="Q7Z4H7"/>
<dbReference type="ProteomicsDB" id="69184">
    <molecule id="Q7Z4H7-1"/>
</dbReference>
<dbReference type="ProteomicsDB" id="69185">
    <molecule id="Q7Z4H7-2"/>
</dbReference>
<dbReference type="ProteomicsDB" id="69186">
    <molecule id="Q7Z4H7-3"/>
</dbReference>
<dbReference type="Pumba" id="Q7Z4H7"/>
<dbReference type="Antibodypedia" id="10241">
    <property type="antibodies" value="113 antibodies from 24 providers"/>
</dbReference>
<dbReference type="DNASU" id="54801"/>
<dbReference type="Ensembl" id="ENST00000380502.8">
    <molecule id="Q7Z4H7-1"/>
    <property type="protein sequence ID" value="ENSP00000369871.3"/>
    <property type="gene ID" value="ENSG00000147874.11"/>
</dbReference>
<dbReference type="GeneID" id="54801"/>
<dbReference type="KEGG" id="hsa:54801"/>
<dbReference type="MANE-Select" id="ENST00000380502.8">
    <property type="protein sequence ID" value="ENSP00000369871.3"/>
    <property type="RefSeq nucleotide sequence ID" value="NM_017645.5"/>
    <property type="RefSeq protein sequence ID" value="NP_060115.3"/>
</dbReference>
<dbReference type="UCSC" id="uc003znk.5">
    <molecule id="Q7Z4H7-1"/>
    <property type="organism name" value="human"/>
</dbReference>
<dbReference type="AGR" id="HGNC:25948"/>
<dbReference type="CTD" id="54801"/>
<dbReference type="DisGeNET" id="54801"/>
<dbReference type="GeneCards" id="HAUS6"/>
<dbReference type="HGNC" id="HGNC:25948">
    <property type="gene designation" value="HAUS6"/>
</dbReference>
<dbReference type="HPA" id="ENSG00000147874">
    <property type="expression patterns" value="Low tissue specificity"/>
</dbReference>
<dbReference type="MIM" id="613433">
    <property type="type" value="gene"/>
</dbReference>
<dbReference type="neXtProt" id="NX_Q7Z4H7"/>
<dbReference type="OpenTargets" id="ENSG00000147874"/>
<dbReference type="PharmGKB" id="PA165585815"/>
<dbReference type="VEuPathDB" id="HostDB:ENSG00000147874"/>
<dbReference type="eggNOG" id="ENOG502QV4W">
    <property type="taxonomic scope" value="Eukaryota"/>
</dbReference>
<dbReference type="GeneTree" id="ENSGT00390000008250"/>
<dbReference type="HOGENOM" id="CLU_311438_0_0_1"/>
<dbReference type="InParanoid" id="Q7Z4H7"/>
<dbReference type="OMA" id="HFARYVA"/>
<dbReference type="OrthoDB" id="5575722at2759"/>
<dbReference type="PAN-GO" id="Q7Z4H7">
    <property type="GO annotations" value="3 GO annotations based on evolutionary models"/>
</dbReference>
<dbReference type="PhylomeDB" id="Q7Z4H7"/>
<dbReference type="TreeFam" id="TF325931"/>
<dbReference type="PathwayCommons" id="Q7Z4H7"/>
<dbReference type="Reactome" id="R-HSA-2565942">
    <property type="pathway name" value="Regulation of PLK1 Activity at G2/M Transition"/>
</dbReference>
<dbReference type="Reactome" id="R-HSA-380259">
    <property type="pathway name" value="Loss of Nlp from mitotic centrosomes"/>
</dbReference>
<dbReference type="Reactome" id="R-HSA-380270">
    <property type="pathway name" value="Recruitment of mitotic centrosome proteins and complexes"/>
</dbReference>
<dbReference type="Reactome" id="R-HSA-380284">
    <property type="pathway name" value="Loss of proteins required for interphase microtubule organization from the centrosome"/>
</dbReference>
<dbReference type="Reactome" id="R-HSA-380320">
    <property type="pathway name" value="Recruitment of NuMA to mitotic centrosomes"/>
</dbReference>
<dbReference type="Reactome" id="R-HSA-5620912">
    <property type="pathway name" value="Anchoring of the basal body to the plasma membrane"/>
</dbReference>
<dbReference type="Reactome" id="R-HSA-8854518">
    <property type="pathway name" value="AURKA Activation by TPX2"/>
</dbReference>
<dbReference type="SignaLink" id="Q7Z4H7"/>
<dbReference type="SIGNOR" id="Q7Z4H7"/>
<dbReference type="BioGRID-ORCS" id="54801">
    <property type="hits" value="700 hits in 1130 CRISPR screens"/>
</dbReference>
<dbReference type="ChiTaRS" id="HAUS6">
    <property type="organism name" value="human"/>
</dbReference>
<dbReference type="GeneWiki" id="FAM29A"/>
<dbReference type="GenomeRNAi" id="54801"/>
<dbReference type="Pharos" id="Q7Z4H7">
    <property type="development level" value="Tbio"/>
</dbReference>
<dbReference type="PRO" id="PR:Q7Z4H7"/>
<dbReference type="Proteomes" id="UP000005640">
    <property type="component" value="Chromosome 9"/>
</dbReference>
<dbReference type="RNAct" id="Q7Z4H7">
    <property type="molecule type" value="protein"/>
</dbReference>
<dbReference type="Bgee" id="ENSG00000147874">
    <property type="expression patterns" value="Expressed in ganglionic eminence and 174 other cell types or tissues"/>
</dbReference>
<dbReference type="ExpressionAtlas" id="Q7Z4H7">
    <property type="expression patterns" value="baseline and differential"/>
</dbReference>
<dbReference type="GO" id="GO:0005813">
    <property type="term" value="C:centrosome"/>
    <property type="evidence" value="ECO:0000314"/>
    <property type="project" value="UniProtKB"/>
</dbReference>
<dbReference type="GO" id="GO:0005829">
    <property type="term" value="C:cytosol"/>
    <property type="evidence" value="ECO:0000304"/>
    <property type="project" value="Reactome"/>
</dbReference>
<dbReference type="GO" id="GO:0070652">
    <property type="term" value="C:HAUS complex"/>
    <property type="evidence" value="ECO:0000314"/>
    <property type="project" value="UniProtKB"/>
</dbReference>
<dbReference type="GO" id="GO:1990498">
    <property type="term" value="C:mitotic spindle microtubule"/>
    <property type="evidence" value="ECO:0000314"/>
    <property type="project" value="UniProtKB"/>
</dbReference>
<dbReference type="GO" id="GO:0008017">
    <property type="term" value="F:microtubule binding"/>
    <property type="evidence" value="ECO:0000318"/>
    <property type="project" value="GO_Central"/>
</dbReference>
<dbReference type="GO" id="GO:0051301">
    <property type="term" value="P:cell division"/>
    <property type="evidence" value="ECO:0007669"/>
    <property type="project" value="UniProtKB-KW"/>
</dbReference>
<dbReference type="GO" id="GO:0007098">
    <property type="term" value="P:centrosome cycle"/>
    <property type="evidence" value="ECO:0000315"/>
    <property type="project" value="UniProtKB"/>
</dbReference>
<dbReference type="GO" id="GO:0000226">
    <property type="term" value="P:microtubule cytoskeleton organization"/>
    <property type="evidence" value="ECO:0000318"/>
    <property type="project" value="GO_Central"/>
</dbReference>
<dbReference type="GO" id="GO:0010968">
    <property type="term" value="P:regulation of microtubule nucleation"/>
    <property type="evidence" value="ECO:0000303"/>
    <property type="project" value="ComplexPortal"/>
</dbReference>
<dbReference type="GO" id="GO:0051225">
    <property type="term" value="P:spindle assembly"/>
    <property type="evidence" value="ECO:0000315"/>
    <property type="project" value="UniProtKB"/>
</dbReference>
<dbReference type="InterPro" id="IPR026797">
    <property type="entry name" value="HAUS_6"/>
</dbReference>
<dbReference type="InterPro" id="IPR028163">
    <property type="entry name" value="HAUS_6_N"/>
</dbReference>
<dbReference type="PANTHER" id="PTHR16151">
    <property type="entry name" value="HAUS AUGMIN-LIKE COMPLEX SUBUNIT 6"/>
    <property type="match status" value="1"/>
</dbReference>
<dbReference type="PANTHER" id="PTHR16151:SF2">
    <property type="entry name" value="HAUS AUGMIN-LIKE COMPLEX SUBUNIT 6"/>
    <property type="match status" value="1"/>
</dbReference>
<dbReference type="Pfam" id="PF14661">
    <property type="entry name" value="HAUS6_N"/>
    <property type="match status" value="1"/>
</dbReference>
<feature type="chain" id="PRO_0000076217" description="HAUS augmin-like complex subunit 6">
    <location>
        <begin position="1"/>
        <end position="955"/>
    </location>
</feature>
<feature type="region of interest" description="Disordered" evidence="2">
    <location>
        <begin position="474"/>
        <end position="495"/>
    </location>
</feature>
<feature type="region of interest" description="Disordered" evidence="2">
    <location>
        <begin position="789"/>
        <end position="814"/>
    </location>
</feature>
<feature type="region of interest" description="Disordered" evidence="2">
    <location>
        <begin position="848"/>
        <end position="876"/>
    </location>
</feature>
<feature type="coiled-coil region" evidence="1">
    <location>
        <begin position="188"/>
        <end position="219"/>
    </location>
</feature>
<feature type="compositionally biased region" description="Basic and acidic residues" evidence="2">
    <location>
        <begin position="479"/>
        <end position="495"/>
    </location>
</feature>
<feature type="modified residue" description="Phosphoserine" evidence="17">
    <location>
        <position position="406"/>
    </location>
</feature>
<feature type="modified residue" description="Phosphoserine" evidence="15 16 18 20">
    <location>
        <position position="507"/>
    </location>
</feature>
<feature type="modified residue" description="Phosphoserine" evidence="20">
    <location>
        <position position="524"/>
    </location>
</feature>
<feature type="modified residue" description="Phosphoserine" evidence="20">
    <location>
        <position position="530"/>
    </location>
</feature>
<feature type="modified residue" description="Phosphoserine" evidence="20">
    <location>
        <position position="550"/>
    </location>
</feature>
<feature type="modified residue" description="Phosphoserine" evidence="13 15 17 18 19 20">
    <location>
        <position position="552"/>
    </location>
</feature>
<feature type="modified residue" description="Phosphothreonine" evidence="14 15 18 20">
    <location>
        <position position="584"/>
    </location>
</feature>
<feature type="modified residue" description="Phosphoserine" evidence="15 20">
    <location>
        <position position="715"/>
    </location>
</feature>
<feature type="modified residue" description="Phosphoserine" evidence="20">
    <location>
        <position position="728"/>
    </location>
</feature>
<feature type="modified residue" description="Phosphoserine" evidence="20">
    <location>
        <position position="742"/>
    </location>
</feature>
<feature type="modified residue" description="Phosphoserine" evidence="14 20">
    <location>
        <position position="805"/>
    </location>
</feature>
<feature type="modified residue" description="Phosphothreonine" evidence="20">
    <location>
        <position position="823"/>
    </location>
</feature>
<feature type="modified residue" description="Phosphoserine" evidence="20">
    <location>
        <position position="908"/>
    </location>
</feature>
<feature type="modified residue" description="Phosphoserine" evidence="20">
    <location>
        <position position="914"/>
    </location>
</feature>
<feature type="modified residue" description="Phosphoserine" evidence="20">
    <location>
        <position position="943"/>
    </location>
</feature>
<feature type="splice variant" id="VSP_040919" description="In isoform 3." evidence="10">
    <location>
        <begin position="355"/>
        <end position="389"/>
    </location>
</feature>
<feature type="splice variant" id="VSP_017017" description="In isoform 2." evidence="11">
    <original>ITEIRSSWRKAIEMEENR</original>
    <variation>SKLIMLSVTFFFHRHNHC</variation>
    <location>
        <begin position="589"/>
        <end position="606"/>
    </location>
</feature>
<feature type="splice variant" id="VSP_017018" description="In isoform 2." evidence="11">
    <location>
        <begin position="607"/>
        <end position="955"/>
    </location>
</feature>
<feature type="sequence variant" id="VAR_062243" description="In dbSNP:rs41269003.">
    <original>S</original>
    <variation>T</variation>
    <location>
        <position position="552"/>
    </location>
</feature>
<feature type="sequence variant" id="VAR_024926" description="In dbSNP:rs10511670." evidence="3">
    <original>H</original>
    <variation>Q</variation>
    <location>
        <position position="674"/>
    </location>
</feature>
<feature type="sequence variant" id="VAR_024927" description="In dbSNP:rs4977493." evidence="4">
    <original>S</original>
    <variation>I</variation>
    <location>
        <position position="761"/>
    </location>
</feature>
<feature type="sequence conflict" description="In Ref. 1; AAQ09022." evidence="12" ref="1">
    <original>D</original>
    <variation>E</variation>
    <location>
        <position position="82"/>
    </location>
</feature>
<feature type="sequence conflict" description="In Ref. 4; AAI11042." evidence="12" ref="4">
    <location>
        <position position="183"/>
    </location>
</feature>
<feature type="sequence conflict" description="In Ref. 3; BAG63294." evidence="12" ref="3">
    <original>Y</original>
    <variation>H</variation>
    <location>
        <position position="297"/>
    </location>
</feature>
<feature type="sequence conflict" description="In Ref. 3; BAB14334." evidence="12" ref="3">
    <original>R</original>
    <variation>G</variation>
    <location>
        <position position="347"/>
    </location>
</feature>
<feature type="sequence conflict" description="In Ref. 3; BAB14388." evidence="12" ref="3">
    <original>S</original>
    <variation>L</variation>
    <location>
        <position position="409"/>
    </location>
</feature>
<feature type="sequence conflict" description="In Ref. 5; AAH10632/AAI14493." evidence="12" ref="5">
    <original>A</original>
    <variation>V</variation>
    <location>
        <position position="615"/>
    </location>
</feature>
<feature type="sequence conflict" description="In Ref. 3; BAB14388." evidence="12" ref="3">
    <original>L</original>
    <variation>M</variation>
    <location>
        <position position="686"/>
    </location>
</feature>
<feature type="sequence conflict" description="In Ref. 3; BAB14334." evidence="12" ref="3">
    <original>EED</original>
    <variation>GKV</variation>
    <location>
        <begin position="936"/>
        <end position="938"/>
    </location>
</feature>
<keyword id="KW-0002">3D-structure</keyword>
<keyword id="KW-0025">Alternative splicing</keyword>
<keyword id="KW-0131">Cell cycle</keyword>
<keyword id="KW-0132">Cell division</keyword>
<keyword id="KW-0175">Coiled coil</keyword>
<keyword id="KW-0963">Cytoplasm</keyword>
<keyword id="KW-0206">Cytoskeleton</keyword>
<keyword id="KW-0493">Microtubule</keyword>
<keyword id="KW-0498">Mitosis</keyword>
<keyword id="KW-0597">Phosphoprotein</keyword>
<keyword id="KW-1267">Proteomics identification</keyword>
<keyword id="KW-1185">Reference proteome</keyword>
<sequence>MSSASVTAFEKEHLWMYLQALGFEPGPATIACGKIVSHTHLGVNMFDKLNRDAFHIISYFLFQVLDQSLTKEVFKFCWPPFDQKSDTEFRKHCCEWIKRISGECGSSFPQVVGSLFLSPGGPKFIHLMYHFARFVAMKYIKSNSKNSSHHFVETFNIKPQDLHKCIARCHFARSRFLQILQRQDCVTQKYQENAQLSVKQVRNLRSECIGLENQIKKMEPYDDHSNMEEKIQKVRSLWASVNETLMFLEKEREVVSSVLSLVNQYALDGTNVAINIPRLLLDKIEKQMFQLHIGNVYEAGKLNLLTVIQLLNEVLKVMKYERCQADQARLTVDLHYLEKETKFQKERLSDLKHMRYRIKDDLTTIRHSVVEKQGEWHKKWKEFLGLSPFSLIKGWTPSVDLLPPMSPLSFDPASEEVYAKSILCQYPASLPDAHKQHNQENGCRGDSDTLGALHDLANSPASFLSQSVSSSDRNSVTVLEKDTKMGTPKEKNEAISKKIPEFEVENSPLSDVAKNTESSAFGGSLPAKKSDPFQKEQDHLVEEVARAVLSDSPQLSEGKEIKLEELIDSLGSNPFLTRNQIPRTPENLITEIRSSWRKAIEMEENRTKEPIQMDAEHREVLPESLPVLHNQREFSMADFLLETTVSDFGQSHLTEEKVISDCECVPQKHVLTSHIDEPPTQNQSDLLNKKVICKQDLECLAFTKLSETSRMETFSPAVGNRIDVMGGSEEEFMKILDHLEVSCNKPSTNKTMLWNSFQISSGISSKSFKDNDFGILHETLPEEVGHLSFNSSSSSEANFKLEPNSPMHGGTLLEDVVGGRQTTPESDFNLQALRSRYEALKKSLSKKREESYLSNSQTPERHKPELSPTPQNVQTDDTLNFLDTCDLHTEHIKPSLRTSIGERKRSLSPLIKFSPVEQRLRTTIACSLGELPNLKEEDILNKSLDAKEPPSDLTR</sequence>
<name>HAUS6_HUMAN</name>
<proteinExistence type="evidence at protein level"/>